<reference key="1">
    <citation type="journal article" date="2007" name="Genome Res.">
        <title>Genome characteristics of facultatively symbiotic Frankia sp. strains reflect host range and host plant biogeography.</title>
        <authorList>
            <person name="Normand P."/>
            <person name="Lapierre P."/>
            <person name="Tisa L.S."/>
            <person name="Gogarten J.P."/>
            <person name="Alloisio N."/>
            <person name="Bagnarol E."/>
            <person name="Bassi C.A."/>
            <person name="Berry A.M."/>
            <person name="Bickhart D.M."/>
            <person name="Choisne N."/>
            <person name="Couloux A."/>
            <person name="Cournoyer B."/>
            <person name="Cruveiller S."/>
            <person name="Daubin V."/>
            <person name="Demange N."/>
            <person name="Francino M.P."/>
            <person name="Goltsman E."/>
            <person name="Huang Y."/>
            <person name="Kopp O.R."/>
            <person name="Labarre L."/>
            <person name="Lapidus A."/>
            <person name="Lavire C."/>
            <person name="Marechal J."/>
            <person name="Martinez M."/>
            <person name="Mastronunzio J.E."/>
            <person name="Mullin B.C."/>
            <person name="Niemann J."/>
            <person name="Pujic P."/>
            <person name="Rawnsley T."/>
            <person name="Rouy Z."/>
            <person name="Schenowitz C."/>
            <person name="Sellstedt A."/>
            <person name="Tavares F."/>
            <person name="Tomkins J.P."/>
            <person name="Vallenet D."/>
            <person name="Valverde C."/>
            <person name="Wall L.G."/>
            <person name="Wang Y."/>
            <person name="Medigue C."/>
            <person name="Benson D.R."/>
        </authorList>
    </citation>
    <scope>NUCLEOTIDE SEQUENCE [LARGE SCALE GENOMIC DNA]</scope>
    <source>
        <strain>DSM 45818 / CECT 9043 / HFP020203 / CcI3</strain>
    </source>
</reference>
<protein>
    <recommendedName>
        <fullName evidence="1">ATP-dependent dethiobiotin synthetase BioD</fullName>
        <ecNumber evidence="1">6.3.3.3</ecNumber>
    </recommendedName>
    <alternativeName>
        <fullName evidence="1">DTB synthetase</fullName>
        <shortName evidence="1">DTBS</shortName>
    </alternativeName>
    <alternativeName>
        <fullName evidence="1">Dethiobiotin synthase</fullName>
    </alternativeName>
</protein>
<gene>
    <name evidence="1" type="primary">bioD</name>
    <name type="ordered locus">Francci3_3762</name>
</gene>
<keyword id="KW-0067">ATP-binding</keyword>
<keyword id="KW-0093">Biotin biosynthesis</keyword>
<keyword id="KW-0963">Cytoplasm</keyword>
<keyword id="KW-0436">Ligase</keyword>
<keyword id="KW-0460">Magnesium</keyword>
<keyword id="KW-0479">Metal-binding</keyword>
<keyword id="KW-0547">Nucleotide-binding</keyword>
<keyword id="KW-1185">Reference proteome</keyword>
<proteinExistence type="inferred from homology"/>
<comment type="function">
    <text evidence="1">Catalyzes a mechanistically unusual reaction, the ATP-dependent insertion of CO2 between the N7 and N8 nitrogen atoms of 7,8-diaminopelargonic acid (DAPA, also called 7,8-diammoniononanoate) to form a ureido ring.</text>
</comment>
<comment type="catalytic activity">
    <reaction evidence="1">
        <text>(7R,8S)-7,8-diammoniononanoate + CO2 + ATP = (4R,5S)-dethiobiotin + ADP + phosphate + 3 H(+)</text>
        <dbReference type="Rhea" id="RHEA:15805"/>
        <dbReference type="ChEBI" id="CHEBI:15378"/>
        <dbReference type="ChEBI" id="CHEBI:16526"/>
        <dbReference type="ChEBI" id="CHEBI:30616"/>
        <dbReference type="ChEBI" id="CHEBI:43474"/>
        <dbReference type="ChEBI" id="CHEBI:149469"/>
        <dbReference type="ChEBI" id="CHEBI:149473"/>
        <dbReference type="ChEBI" id="CHEBI:456216"/>
        <dbReference type="EC" id="6.3.3.3"/>
    </reaction>
</comment>
<comment type="cofactor">
    <cofactor evidence="1">
        <name>Mg(2+)</name>
        <dbReference type="ChEBI" id="CHEBI:18420"/>
    </cofactor>
</comment>
<comment type="pathway">
    <text evidence="1">Cofactor biosynthesis; biotin biosynthesis; biotin from 7,8-diaminononanoate: step 1/2.</text>
</comment>
<comment type="subunit">
    <text evidence="1">Homodimer.</text>
</comment>
<comment type="subcellular location">
    <subcellularLocation>
        <location evidence="1">Cytoplasm</location>
    </subcellularLocation>
</comment>
<comment type="similarity">
    <text evidence="1">Belongs to the dethiobiotin synthetase family.</text>
</comment>
<organism>
    <name type="scientific">Frankia casuarinae (strain DSM 45818 / CECT 9043 / HFP020203 / CcI3)</name>
    <dbReference type="NCBI Taxonomy" id="106370"/>
    <lineage>
        <taxon>Bacteria</taxon>
        <taxon>Bacillati</taxon>
        <taxon>Actinomycetota</taxon>
        <taxon>Actinomycetes</taxon>
        <taxon>Frankiales</taxon>
        <taxon>Frankiaceae</taxon>
        <taxon>Frankia</taxon>
    </lineage>
</organism>
<feature type="chain" id="PRO_0000302511" description="ATP-dependent dethiobiotin synthetase BioD">
    <location>
        <begin position="1"/>
        <end position="238"/>
    </location>
</feature>
<feature type="active site" evidence="1">
    <location>
        <position position="37"/>
    </location>
</feature>
<feature type="binding site" evidence="1">
    <location>
        <begin position="12"/>
        <end position="17"/>
    </location>
    <ligand>
        <name>ATP</name>
        <dbReference type="ChEBI" id="CHEBI:30616"/>
    </ligand>
</feature>
<feature type="binding site" evidence="1">
    <location>
        <position position="16"/>
    </location>
    <ligand>
        <name>Mg(2+)</name>
        <dbReference type="ChEBI" id="CHEBI:18420"/>
    </ligand>
</feature>
<feature type="binding site" evidence="1">
    <location>
        <position position="41"/>
    </location>
    <ligand>
        <name>substrate</name>
    </ligand>
</feature>
<feature type="binding site" evidence="1">
    <location>
        <position position="50"/>
    </location>
    <ligand>
        <name>ATP</name>
        <dbReference type="ChEBI" id="CHEBI:30616"/>
    </ligand>
</feature>
<feature type="binding site" evidence="1">
    <location>
        <position position="50"/>
    </location>
    <ligand>
        <name>Mg(2+)</name>
        <dbReference type="ChEBI" id="CHEBI:18420"/>
    </ligand>
</feature>
<feature type="binding site" evidence="1">
    <location>
        <begin position="109"/>
        <end position="112"/>
    </location>
    <ligand>
        <name>ATP</name>
        <dbReference type="ChEBI" id="CHEBI:30616"/>
    </ligand>
</feature>
<feature type="binding site" evidence="1">
    <location>
        <position position="109"/>
    </location>
    <ligand>
        <name>Mg(2+)</name>
        <dbReference type="ChEBI" id="CHEBI:18420"/>
    </ligand>
</feature>
<feature type="binding site" evidence="1">
    <location>
        <begin position="170"/>
        <end position="171"/>
    </location>
    <ligand>
        <name>ATP</name>
        <dbReference type="ChEBI" id="CHEBI:30616"/>
    </ligand>
</feature>
<feature type="binding site" evidence="1">
    <location>
        <begin position="200"/>
        <end position="202"/>
    </location>
    <ligand>
        <name>ATP</name>
        <dbReference type="ChEBI" id="CHEBI:30616"/>
    </ligand>
</feature>
<name>BIOD_FRACC</name>
<dbReference type="EC" id="6.3.3.3" evidence="1"/>
<dbReference type="EMBL" id="CP000249">
    <property type="protein sequence ID" value="ABD13113.1"/>
    <property type="molecule type" value="Genomic_DNA"/>
</dbReference>
<dbReference type="RefSeq" id="WP_011438137.1">
    <property type="nucleotide sequence ID" value="NZ_MSEA01000522.1"/>
</dbReference>
<dbReference type="SMR" id="Q2J6H9"/>
<dbReference type="STRING" id="106370.Francci3_3762"/>
<dbReference type="KEGG" id="fra:Francci3_3762"/>
<dbReference type="eggNOG" id="COG0132">
    <property type="taxonomic scope" value="Bacteria"/>
</dbReference>
<dbReference type="HOGENOM" id="CLU_072551_1_0_11"/>
<dbReference type="OrthoDB" id="9802610at2"/>
<dbReference type="PhylomeDB" id="Q2J6H9"/>
<dbReference type="UniPathway" id="UPA00078">
    <property type="reaction ID" value="UER00161"/>
</dbReference>
<dbReference type="Proteomes" id="UP000001937">
    <property type="component" value="Chromosome"/>
</dbReference>
<dbReference type="GO" id="GO:0005829">
    <property type="term" value="C:cytosol"/>
    <property type="evidence" value="ECO:0007669"/>
    <property type="project" value="TreeGrafter"/>
</dbReference>
<dbReference type="GO" id="GO:0005524">
    <property type="term" value="F:ATP binding"/>
    <property type="evidence" value="ECO:0007669"/>
    <property type="project" value="UniProtKB-UniRule"/>
</dbReference>
<dbReference type="GO" id="GO:0004141">
    <property type="term" value="F:dethiobiotin synthase activity"/>
    <property type="evidence" value="ECO:0007669"/>
    <property type="project" value="UniProtKB-UniRule"/>
</dbReference>
<dbReference type="GO" id="GO:0000287">
    <property type="term" value="F:magnesium ion binding"/>
    <property type="evidence" value="ECO:0007669"/>
    <property type="project" value="UniProtKB-UniRule"/>
</dbReference>
<dbReference type="GO" id="GO:0009102">
    <property type="term" value="P:biotin biosynthetic process"/>
    <property type="evidence" value="ECO:0007669"/>
    <property type="project" value="UniProtKB-UniRule"/>
</dbReference>
<dbReference type="CDD" id="cd03109">
    <property type="entry name" value="DTBS"/>
    <property type="match status" value="1"/>
</dbReference>
<dbReference type="Gene3D" id="3.40.50.300">
    <property type="entry name" value="P-loop containing nucleotide triphosphate hydrolases"/>
    <property type="match status" value="1"/>
</dbReference>
<dbReference type="HAMAP" id="MF_00336">
    <property type="entry name" value="BioD"/>
    <property type="match status" value="1"/>
</dbReference>
<dbReference type="InterPro" id="IPR004472">
    <property type="entry name" value="DTB_synth_BioD"/>
</dbReference>
<dbReference type="InterPro" id="IPR027417">
    <property type="entry name" value="P-loop_NTPase"/>
</dbReference>
<dbReference type="NCBIfam" id="TIGR00347">
    <property type="entry name" value="bioD"/>
    <property type="match status" value="1"/>
</dbReference>
<dbReference type="PANTHER" id="PTHR43210">
    <property type="entry name" value="DETHIOBIOTIN SYNTHETASE"/>
    <property type="match status" value="1"/>
</dbReference>
<dbReference type="PANTHER" id="PTHR43210:SF5">
    <property type="entry name" value="DETHIOBIOTIN SYNTHETASE"/>
    <property type="match status" value="1"/>
</dbReference>
<dbReference type="Pfam" id="PF13500">
    <property type="entry name" value="AAA_26"/>
    <property type="match status" value="1"/>
</dbReference>
<dbReference type="PIRSF" id="PIRSF006755">
    <property type="entry name" value="DTB_synth"/>
    <property type="match status" value="1"/>
</dbReference>
<dbReference type="SUPFAM" id="SSF52540">
    <property type="entry name" value="P-loop containing nucleoside triphosphate hydrolases"/>
    <property type="match status" value="1"/>
</dbReference>
<sequence>MTALVVTGTGTGVGKTVVTAAIGALAHDRHHAVAVVKPAQTGVGPGELGDVDLVRDLTGITDVHELARYPDPLAPATAARRSGHRAVDLDELAARIGTLADSRDLVLVEGAGGLLVRYDAGGATLADLARVLRAPVLVVTAAGLGALNDTALTLEALAHRGLDLAGVVVGSWPAEPDLACRCNLIDLESLAARPLAGVLPAGAGLLARLEFLAVARASLQPALGGTFRAQEFRARYET</sequence>
<accession>Q2J6H9</accession>
<evidence type="ECO:0000255" key="1">
    <source>
        <dbReference type="HAMAP-Rule" id="MF_00336"/>
    </source>
</evidence>